<proteinExistence type="inferred from homology"/>
<accession>P0CO82</accession>
<accession>Q55TC3</accession>
<accession>Q5KJ15</accession>
<reference key="1">
    <citation type="journal article" date="2005" name="Science">
        <title>The genome of the basidiomycetous yeast and human pathogen Cryptococcus neoformans.</title>
        <authorList>
            <person name="Loftus B.J."/>
            <person name="Fung E."/>
            <person name="Roncaglia P."/>
            <person name="Rowley D."/>
            <person name="Amedeo P."/>
            <person name="Bruno D."/>
            <person name="Vamathevan J."/>
            <person name="Miranda M."/>
            <person name="Anderson I.J."/>
            <person name="Fraser J.A."/>
            <person name="Allen J.E."/>
            <person name="Bosdet I.E."/>
            <person name="Brent M.R."/>
            <person name="Chiu R."/>
            <person name="Doering T.L."/>
            <person name="Donlin M.J."/>
            <person name="D'Souza C.A."/>
            <person name="Fox D.S."/>
            <person name="Grinberg V."/>
            <person name="Fu J."/>
            <person name="Fukushima M."/>
            <person name="Haas B.J."/>
            <person name="Huang J.C."/>
            <person name="Janbon G."/>
            <person name="Jones S.J.M."/>
            <person name="Koo H.L."/>
            <person name="Krzywinski M.I."/>
            <person name="Kwon-Chung K.J."/>
            <person name="Lengeler K.B."/>
            <person name="Maiti R."/>
            <person name="Marra M.A."/>
            <person name="Marra R.E."/>
            <person name="Mathewson C.A."/>
            <person name="Mitchell T.G."/>
            <person name="Pertea M."/>
            <person name="Riggs F.R."/>
            <person name="Salzberg S.L."/>
            <person name="Schein J.E."/>
            <person name="Shvartsbeyn A."/>
            <person name="Shin H."/>
            <person name="Shumway M."/>
            <person name="Specht C.A."/>
            <person name="Suh B.B."/>
            <person name="Tenney A."/>
            <person name="Utterback T.R."/>
            <person name="Wickes B.L."/>
            <person name="Wortman J.R."/>
            <person name="Wye N.H."/>
            <person name="Kronstad J.W."/>
            <person name="Lodge J.K."/>
            <person name="Heitman J."/>
            <person name="Davis R.W."/>
            <person name="Fraser C.M."/>
            <person name="Hyman R.W."/>
        </authorList>
    </citation>
    <scope>NUCLEOTIDE SEQUENCE [LARGE SCALE GENOMIC DNA]</scope>
    <source>
        <strain>JEC21 / ATCC MYA-565</strain>
    </source>
</reference>
<gene>
    <name type="primary">MON1</name>
    <name type="ordered locus">CND01000</name>
</gene>
<dbReference type="EMBL" id="AE017344">
    <property type="protein sequence ID" value="AAW43007.1"/>
    <property type="molecule type" value="Genomic_DNA"/>
</dbReference>
<dbReference type="RefSeq" id="XP_570314.1">
    <property type="nucleotide sequence ID" value="XM_570314.1"/>
</dbReference>
<dbReference type="SMR" id="P0CO82"/>
<dbReference type="FunCoup" id="P0CO82">
    <property type="interactions" value="220"/>
</dbReference>
<dbReference type="STRING" id="214684.P0CO82"/>
<dbReference type="PaxDb" id="214684-P0CO82"/>
<dbReference type="EnsemblFungi" id="AAW43007">
    <property type="protein sequence ID" value="AAW43007"/>
    <property type="gene ID" value="CND01000"/>
</dbReference>
<dbReference type="GeneID" id="3256977"/>
<dbReference type="KEGG" id="cne:CND01000"/>
<dbReference type="VEuPathDB" id="FungiDB:CND01000"/>
<dbReference type="eggNOG" id="KOG0997">
    <property type="taxonomic scope" value="Eukaryota"/>
</dbReference>
<dbReference type="HOGENOM" id="CLU_014574_2_0_1"/>
<dbReference type="InParanoid" id="P0CO82"/>
<dbReference type="OMA" id="QQPFNAK"/>
<dbReference type="OrthoDB" id="272411at2759"/>
<dbReference type="Proteomes" id="UP000002149">
    <property type="component" value="Chromosome 4"/>
</dbReference>
<dbReference type="GO" id="GO:0000329">
    <property type="term" value="C:fungal-type vacuole membrane"/>
    <property type="evidence" value="ECO:0000318"/>
    <property type="project" value="GO_Central"/>
</dbReference>
<dbReference type="GO" id="GO:0035658">
    <property type="term" value="C:Mon1-Ccz1 complex"/>
    <property type="evidence" value="ECO:0000318"/>
    <property type="project" value="GO_Central"/>
</dbReference>
<dbReference type="GO" id="GO:0032585">
    <property type="term" value="C:multivesicular body membrane"/>
    <property type="evidence" value="ECO:0007669"/>
    <property type="project" value="UniProtKB-SubCell"/>
</dbReference>
<dbReference type="GO" id="GO:0006914">
    <property type="term" value="P:autophagy"/>
    <property type="evidence" value="ECO:0007669"/>
    <property type="project" value="UniProtKB-KW"/>
</dbReference>
<dbReference type="GO" id="GO:0006623">
    <property type="term" value="P:protein targeting to vacuole"/>
    <property type="evidence" value="ECO:0000318"/>
    <property type="project" value="GO_Central"/>
</dbReference>
<dbReference type="GO" id="GO:0016192">
    <property type="term" value="P:vesicle-mediated transport"/>
    <property type="evidence" value="ECO:0007669"/>
    <property type="project" value="InterPro"/>
</dbReference>
<dbReference type="InterPro" id="IPR043972">
    <property type="entry name" value="FUZ/MON1/HPS1_longin_1"/>
</dbReference>
<dbReference type="InterPro" id="IPR043971">
    <property type="entry name" value="FUZ/MON1/HPS1_longin_2"/>
</dbReference>
<dbReference type="InterPro" id="IPR043970">
    <property type="entry name" value="FUZ/MON1/HPS1_longin_3"/>
</dbReference>
<dbReference type="InterPro" id="IPR004353">
    <property type="entry name" value="Mon1"/>
</dbReference>
<dbReference type="PANTHER" id="PTHR13027">
    <property type="entry name" value="SAND PROTEIN-RELATED"/>
    <property type="match status" value="1"/>
</dbReference>
<dbReference type="PANTHER" id="PTHR13027:SF7">
    <property type="entry name" value="VACUOLAR FUSION PROTEIN MON1 HOMOLOG"/>
    <property type="match status" value="1"/>
</dbReference>
<dbReference type="Pfam" id="PF19036">
    <property type="entry name" value="Fuz_longin_1"/>
    <property type="match status" value="1"/>
</dbReference>
<dbReference type="Pfam" id="PF19037">
    <property type="entry name" value="Fuz_longin_2"/>
    <property type="match status" value="1"/>
</dbReference>
<dbReference type="Pfam" id="PF19038">
    <property type="entry name" value="Fuz_longin_3"/>
    <property type="match status" value="1"/>
</dbReference>
<dbReference type="PRINTS" id="PR01546">
    <property type="entry name" value="YEAST73DUF"/>
</dbReference>
<keyword id="KW-0072">Autophagy</keyword>
<keyword id="KW-0967">Endosome</keyword>
<keyword id="KW-0472">Membrane</keyword>
<keyword id="KW-0653">Protein transport</keyword>
<keyword id="KW-1185">Reference proteome</keyword>
<keyword id="KW-0813">Transport</keyword>
<keyword id="KW-0926">Vacuole</keyword>
<comment type="function">
    <text evidence="2">In complex with CCZ1, is required for multiple vacuole delivery pathways including the cytoplasm to vacuole transport (Cvt), autophagy, pexophagy and endocytosis. The MON1-CCZ1 complex acts at the fusion of vesicles with the vacuole, through its regulation of the SNARE complex during the coordinated priming and docking stages of fusion, and particularly at the stage of tethering/docking.</text>
</comment>
<comment type="subcellular location">
    <subcellularLocation>
        <location evidence="1">Endosome</location>
        <location evidence="1">Multivesicular body membrane</location>
        <topology evidence="1">Peripheral membrane protein</topology>
    </subcellularLocation>
    <subcellularLocation>
        <location evidence="1">Prevacuolar compartment membrane</location>
        <topology evidence="1">Peripheral membrane protein</topology>
    </subcellularLocation>
    <subcellularLocation>
        <location evidence="1">Vacuole membrane</location>
        <topology evidence="1">Peripheral membrane protein</topology>
    </subcellularLocation>
</comment>
<comment type="similarity">
    <text evidence="4">Belongs to the MON1/SAND family.</text>
</comment>
<organism>
    <name type="scientific">Cryptococcus neoformans var. neoformans serotype D (strain JEC21 / ATCC MYA-565)</name>
    <name type="common">Filobasidiella neoformans</name>
    <dbReference type="NCBI Taxonomy" id="214684"/>
    <lineage>
        <taxon>Eukaryota</taxon>
        <taxon>Fungi</taxon>
        <taxon>Dikarya</taxon>
        <taxon>Basidiomycota</taxon>
        <taxon>Agaricomycotina</taxon>
        <taxon>Tremellomycetes</taxon>
        <taxon>Tremellales</taxon>
        <taxon>Cryptococcaceae</taxon>
        <taxon>Cryptococcus</taxon>
        <taxon>Cryptococcus neoformans species complex</taxon>
    </lineage>
</organism>
<protein>
    <recommendedName>
        <fullName>Vacuolar fusion protein MON1</fullName>
    </recommendedName>
</protein>
<evidence type="ECO:0000250" key="1"/>
<evidence type="ECO:0000250" key="2">
    <source>
        <dbReference type="UniProtKB" id="P53129"/>
    </source>
</evidence>
<evidence type="ECO:0000256" key="3">
    <source>
        <dbReference type="SAM" id="MobiDB-lite"/>
    </source>
</evidence>
<evidence type="ECO:0000305" key="4"/>
<feature type="chain" id="PRO_0000278860" description="Vacuolar fusion protein MON1">
    <location>
        <begin position="1"/>
        <end position="619"/>
    </location>
</feature>
<feature type="region of interest" description="Disordered" evidence="3">
    <location>
        <begin position="1"/>
        <end position="145"/>
    </location>
</feature>
<feature type="compositionally biased region" description="Polar residues" evidence="3">
    <location>
        <begin position="1"/>
        <end position="33"/>
    </location>
</feature>
<feature type="compositionally biased region" description="Polar residues" evidence="3">
    <location>
        <begin position="41"/>
        <end position="58"/>
    </location>
</feature>
<feature type="compositionally biased region" description="Low complexity" evidence="3">
    <location>
        <begin position="73"/>
        <end position="90"/>
    </location>
</feature>
<feature type="compositionally biased region" description="Basic and acidic residues" evidence="3">
    <location>
        <begin position="93"/>
        <end position="102"/>
    </location>
</feature>
<feature type="compositionally biased region" description="Polar residues" evidence="3">
    <location>
        <begin position="123"/>
        <end position="132"/>
    </location>
</feature>
<feature type="compositionally biased region" description="Basic and acidic residues" evidence="3">
    <location>
        <begin position="135"/>
        <end position="145"/>
    </location>
</feature>
<sequence length="619" mass="68569">MTSESEPNTSLPFSPIQQTLPATPSRSTSQVSMVSAEALLSHSSPTKQLTPSHRSSLPSALPYNTLLNAPAGSPALRARASTASSSRAPSVLDDARVEHNDSETQVLEITPPMDNYELDGGSDHTSLPSDASSIKGKEKQRSNDRNEIETVGAGGEMALPSGDARKGLKELVRRSTTADKGYGGHDHRRLSEKLSQNENLQILITQSDKMSYSPRLYYVLTNAGKPVFCSHTRPSEDDVTNLMGVAQALISIFADDDDRLRYIIKGNHRVAFLLKAPLYLFCVSDWGEPEHVLRLQLEYIHLQILSVVSSTQLLRLFQRRSNADLSTLLEGTEPFLSNLIDCSQYDFSFLTSTLQPLRMAPALRDTSAAALMPPSKFKDLLYVLLIAGGHIVTVLRPRKHSIHPSDLHLLLNTIASSSALRTTETWLPICFPKFNPSGFVHAYISYVLEDVGLVFVSADREAFEDLRVWKDMVLEKLEQDKTLSRIQEAIPLHPYTISSVGCPGLRHFIYKSRQHVQITQPIWEAPYEDGSTNQKRLVTTYQKLHDAVHAKSGQASALKLVYISTEHEACLVWATKPFELYITVSPQLSKSAVVAAANNVAKWVLAEEGRIFLKDAPVF</sequence>
<name>MON1_CRYNJ</name>